<feature type="chain" id="PRO_0000073574" description="Caltractin">
    <location>
        <begin position="1" status="less than"/>
        <end position="148"/>
    </location>
</feature>
<feature type="domain" description="EF-hand 1" evidence="1">
    <location>
        <begin position="4"/>
        <end position="39"/>
    </location>
</feature>
<feature type="domain" description="EF-hand 2" evidence="1">
    <location>
        <begin position="40"/>
        <end position="75"/>
    </location>
</feature>
<feature type="domain" description="EF-hand 3" evidence="1">
    <location>
        <begin position="77"/>
        <end position="112"/>
    </location>
</feature>
<feature type="domain" description="EF-hand 4" evidence="1">
    <location>
        <begin position="113"/>
        <end position="148"/>
    </location>
</feature>
<feature type="binding site" evidence="1">
    <location>
        <position position="17"/>
    </location>
    <ligand>
        <name>Ca(2+)</name>
        <dbReference type="ChEBI" id="CHEBI:29108"/>
        <label>1</label>
    </ligand>
</feature>
<feature type="binding site" evidence="1">
    <location>
        <position position="19"/>
    </location>
    <ligand>
        <name>Ca(2+)</name>
        <dbReference type="ChEBI" id="CHEBI:29108"/>
        <label>1</label>
    </ligand>
</feature>
<feature type="binding site" evidence="1">
    <location>
        <position position="21"/>
    </location>
    <ligand>
        <name>Ca(2+)</name>
        <dbReference type="ChEBI" id="CHEBI:29108"/>
        <label>1</label>
    </ligand>
</feature>
<feature type="binding site" evidence="1">
    <location>
        <position position="23"/>
    </location>
    <ligand>
        <name>Ca(2+)</name>
        <dbReference type="ChEBI" id="CHEBI:29108"/>
        <label>1</label>
    </ligand>
</feature>
<feature type="binding site" evidence="1">
    <location>
        <position position="28"/>
    </location>
    <ligand>
        <name>Ca(2+)</name>
        <dbReference type="ChEBI" id="CHEBI:29108"/>
        <label>1</label>
    </ligand>
</feature>
<feature type="binding site" evidence="1">
    <location>
        <position position="53"/>
    </location>
    <ligand>
        <name>Ca(2+)</name>
        <dbReference type="ChEBI" id="CHEBI:29108"/>
        <label>2</label>
    </ligand>
</feature>
<feature type="binding site" evidence="1">
    <location>
        <position position="55"/>
    </location>
    <ligand>
        <name>Ca(2+)</name>
        <dbReference type="ChEBI" id="CHEBI:29108"/>
        <label>2</label>
    </ligand>
</feature>
<feature type="binding site" evidence="1">
    <location>
        <position position="57"/>
    </location>
    <ligand>
        <name>Ca(2+)</name>
        <dbReference type="ChEBI" id="CHEBI:29108"/>
        <label>2</label>
    </ligand>
</feature>
<feature type="binding site" evidence="1">
    <location>
        <position position="59"/>
    </location>
    <ligand>
        <name>Ca(2+)</name>
        <dbReference type="ChEBI" id="CHEBI:29108"/>
        <label>2</label>
    </ligand>
</feature>
<feature type="binding site" evidence="1">
    <location>
        <position position="64"/>
    </location>
    <ligand>
        <name>Ca(2+)</name>
        <dbReference type="ChEBI" id="CHEBI:29108"/>
        <label>2</label>
    </ligand>
</feature>
<feature type="binding site" evidence="1">
    <location>
        <position position="126"/>
    </location>
    <ligand>
        <name>Ca(2+)</name>
        <dbReference type="ChEBI" id="CHEBI:29108"/>
        <label>3</label>
    </ligand>
</feature>
<feature type="binding site" evidence="1">
    <location>
        <position position="128"/>
    </location>
    <ligand>
        <name>Ca(2+)</name>
        <dbReference type="ChEBI" id="CHEBI:29108"/>
        <label>3</label>
    </ligand>
</feature>
<feature type="binding site" evidence="1">
    <location>
        <position position="130"/>
    </location>
    <ligand>
        <name>Ca(2+)</name>
        <dbReference type="ChEBI" id="CHEBI:29108"/>
        <label>3</label>
    </ligand>
</feature>
<feature type="binding site" evidence="1">
    <location>
        <position position="132"/>
    </location>
    <ligand>
        <name>Ca(2+)</name>
        <dbReference type="ChEBI" id="CHEBI:29108"/>
        <label>3</label>
    </ligand>
</feature>
<feature type="binding site" evidence="1">
    <location>
        <position position="137"/>
    </location>
    <ligand>
        <name>Ca(2+)</name>
        <dbReference type="ChEBI" id="CHEBI:29108"/>
        <label>3</label>
    </ligand>
</feature>
<feature type="non-terminal residue">
    <location>
        <position position="1"/>
    </location>
</feature>
<proteinExistence type="evidence at transcript level"/>
<evidence type="ECO:0000255" key="1">
    <source>
        <dbReference type="PROSITE-ProRule" id="PRU00448"/>
    </source>
</evidence>
<evidence type="ECO:0000305" key="2"/>
<accession>P43645</accession>
<protein>
    <recommendedName>
        <fullName>Caltractin</fullName>
    </recommendedName>
    <alternativeName>
        <fullName>Centrin</fullName>
    </alternativeName>
</protein>
<reference key="1">
    <citation type="journal article" date="1993" name="Plant Mol. Biol.">
        <title>Molecular cloning and evolutionary analysis of the calcium-modulated contractile protein, centrin, in green algae and land plants.</title>
        <authorList>
            <person name="Bhattacharya D."/>
            <person name="Steinkoetter J."/>
            <person name="Melkonian M."/>
        </authorList>
    </citation>
    <scope>NUCLEOTIDE SEQUENCE [MRNA]</scope>
</reference>
<keyword id="KW-0106">Calcium</keyword>
<keyword id="KW-0131">Cell cycle</keyword>
<keyword id="KW-0132">Cell division</keyword>
<keyword id="KW-0479">Metal-binding</keyword>
<keyword id="KW-0498">Mitosis</keyword>
<keyword id="KW-0677">Repeat</keyword>
<comment type="function">
    <text>This calcium-binding protein is found in the basal body complexes (the functional homolog of the centrosome in animal cell). In mitotic cells it is specifically associated with the poles of the mitotic spindles at the sites of the duplicated basal body complexes.</text>
</comment>
<comment type="tissue specificity">
    <text>Ubiquitous.</text>
</comment>
<comment type="similarity">
    <text evidence="2">Belongs to the centrin family.</text>
</comment>
<dbReference type="EMBL" id="X70657">
    <property type="status" value="NOT_ANNOTATED_CDS"/>
    <property type="molecule type" value="mRNA"/>
</dbReference>
<dbReference type="GO" id="GO:0016460">
    <property type="term" value="C:myosin II complex"/>
    <property type="evidence" value="ECO:0007669"/>
    <property type="project" value="TreeGrafter"/>
</dbReference>
<dbReference type="GO" id="GO:0005509">
    <property type="term" value="F:calcium ion binding"/>
    <property type="evidence" value="ECO:0007669"/>
    <property type="project" value="InterPro"/>
</dbReference>
<dbReference type="GO" id="GO:0051301">
    <property type="term" value="P:cell division"/>
    <property type="evidence" value="ECO:0007669"/>
    <property type="project" value="UniProtKB-KW"/>
</dbReference>
<dbReference type="CDD" id="cd00051">
    <property type="entry name" value="EFh"/>
    <property type="match status" value="2"/>
</dbReference>
<dbReference type="FunFam" id="1.10.238.10:FF:000077">
    <property type="entry name" value="Centrin 1"/>
    <property type="match status" value="1"/>
</dbReference>
<dbReference type="FunFam" id="1.10.238.10:FF:000070">
    <property type="entry name" value="Centrin-1"/>
    <property type="match status" value="1"/>
</dbReference>
<dbReference type="Gene3D" id="1.10.238.10">
    <property type="entry name" value="EF-hand"/>
    <property type="match status" value="2"/>
</dbReference>
<dbReference type="InterPro" id="IPR050230">
    <property type="entry name" value="CALM/Myosin/TropC-like"/>
</dbReference>
<dbReference type="InterPro" id="IPR011992">
    <property type="entry name" value="EF-hand-dom_pair"/>
</dbReference>
<dbReference type="InterPro" id="IPR018247">
    <property type="entry name" value="EF_Hand_1_Ca_BS"/>
</dbReference>
<dbReference type="InterPro" id="IPR002048">
    <property type="entry name" value="EF_hand_dom"/>
</dbReference>
<dbReference type="InterPro" id="IPR000629">
    <property type="entry name" value="RNA-helicase_DEAD-box_CS"/>
</dbReference>
<dbReference type="PANTHER" id="PTHR23048:SF59">
    <property type="entry name" value="EF-HAND SUPERFAMILY PROTEIN"/>
    <property type="match status" value="1"/>
</dbReference>
<dbReference type="PANTHER" id="PTHR23048">
    <property type="entry name" value="MYOSIN LIGHT CHAIN 1, 3"/>
    <property type="match status" value="1"/>
</dbReference>
<dbReference type="Pfam" id="PF13499">
    <property type="entry name" value="EF-hand_7"/>
    <property type="match status" value="2"/>
</dbReference>
<dbReference type="SMART" id="SM00054">
    <property type="entry name" value="EFh"/>
    <property type="match status" value="4"/>
</dbReference>
<dbReference type="SUPFAM" id="SSF47473">
    <property type="entry name" value="EF-hand"/>
    <property type="match status" value="1"/>
</dbReference>
<dbReference type="PROSITE" id="PS00018">
    <property type="entry name" value="EF_HAND_1"/>
    <property type="match status" value="3"/>
</dbReference>
<dbReference type="PROSITE" id="PS50222">
    <property type="entry name" value="EF_HAND_2"/>
    <property type="match status" value="4"/>
</dbReference>
<sequence>LTEEQKQEXREAFDLFDTDGSGTIDAKELKVXMXALGFEPKKEEIQKMISDIDKDGSGTIDFEEFLQMMTAKMGERDSREEIMKAFRLFDDDQTGKITFKNLKRVAKELGENLTDEEIQEMIDEADRDGDGEINEEEFFRIMKKTSLF</sequence>
<organism>
    <name type="scientific">Spermatozopsis similis</name>
    <name type="common">Green alga</name>
    <dbReference type="NCBI Taxonomy" id="3192"/>
    <lineage>
        <taxon>Eukaryota</taxon>
        <taxon>Viridiplantae</taxon>
        <taxon>Chlorophyta</taxon>
        <taxon>core chlorophytes</taxon>
        <taxon>Chlorophyceae</taxon>
        <taxon>CS clade</taxon>
        <taxon>Chlamydomonadales</taxon>
        <taxon>Dunaliellaceae</taxon>
        <taxon>Spermatozopsis</taxon>
    </lineage>
</organism>
<name>CATR_SPESI</name>